<name>GSA_GEOMG</name>
<feature type="chain" id="PRO_0000243575" description="Glutamate-1-semialdehyde 2,1-aminomutase">
    <location>
        <begin position="1"/>
        <end position="427"/>
    </location>
</feature>
<feature type="modified residue" description="N6-(pyridoxal phosphate)lysine" evidence="1">
    <location>
        <position position="267"/>
    </location>
</feature>
<comment type="catalytic activity">
    <reaction evidence="1">
        <text>(S)-4-amino-5-oxopentanoate = 5-aminolevulinate</text>
        <dbReference type="Rhea" id="RHEA:14265"/>
        <dbReference type="ChEBI" id="CHEBI:57501"/>
        <dbReference type="ChEBI" id="CHEBI:356416"/>
        <dbReference type="EC" id="5.4.3.8"/>
    </reaction>
</comment>
<comment type="cofactor">
    <cofactor evidence="1">
        <name>pyridoxal 5'-phosphate</name>
        <dbReference type="ChEBI" id="CHEBI:597326"/>
    </cofactor>
</comment>
<comment type="pathway">
    <text evidence="1">Porphyrin-containing compound metabolism; protoporphyrin-IX biosynthesis; 5-aminolevulinate from L-glutamyl-tRNA(Glu): step 2/2.</text>
</comment>
<comment type="subunit">
    <text evidence="1">Homodimer.</text>
</comment>
<comment type="subcellular location">
    <subcellularLocation>
        <location evidence="1">Cytoplasm</location>
    </subcellularLocation>
</comment>
<comment type="similarity">
    <text evidence="1">Belongs to the class-III pyridoxal-phosphate-dependent aminotransferase family. HemL subfamily.</text>
</comment>
<evidence type="ECO:0000255" key="1">
    <source>
        <dbReference type="HAMAP-Rule" id="MF_00375"/>
    </source>
</evidence>
<accession>Q39QA6</accession>
<protein>
    <recommendedName>
        <fullName evidence="1">Glutamate-1-semialdehyde 2,1-aminomutase</fullName>
        <shortName evidence="1">GSA</shortName>
        <ecNumber evidence="1">5.4.3.8</ecNumber>
    </recommendedName>
    <alternativeName>
        <fullName evidence="1">Glutamate-1-semialdehyde aminotransferase</fullName>
        <shortName evidence="1">GSA-AT</shortName>
    </alternativeName>
</protein>
<dbReference type="EC" id="5.4.3.8" evidence="1"/>
<dbReference type="EMBL" id="CP000148">
    <property type="protein sequence ID" value="ABB33568.1"/>
    <property type="molecule type" value="Genomic_DNA"/>
</dbReference>
<dbReference type="RefSeq" id="WP_004512582.1">
    <property type="nucleotide sequence ID" value="NC_007517.1"/>
</dbReference>
<dbReference type="SMR" id="Q39QA6"/>
<dbReference type="STRING" id="269799.Gmet_3356"/>
<dbReference type="KEGG" id="gme:Gmet_3356"/>
<dbReference type="eggNOG" id="COG0001">
    <property type="taxonomic scope" value="Bacteria"/>
</dbReference>
<dbReference type="HOGENOM" id="CLU_016922_1_5_7"/>
<dbReference type="UniPathway" id="UPA00251">
    <property type="reaction ID" value="UER00317"/>
</dbReference>
<dbReference type="Proteomes" id="UP000007073">
    <property type="component" value="Chromosome"/>
</dbReference>
<dbReference type="GO" id="GO:0005737">
    <property type="term" value="C:cytoplasm"/>
    <property type="evidence" value="ECO:0007669"/>
    <property type="project" value="UniProtKB-SubCell"/>
</dbReference>
<dbReference type="GO" id="GO:0042286">
    <property type="term" value="F:glutamate-1-semialdehyde 2,1-aminomutase activity"/>
    <property type="evidence" value="ECO:0007669"/>
    <property type="project" value="UniProtKB-UniRule"/>
</dbReference>
<dbReference type="GO" id="GO:0030170">
    <property type="term" value="F:pyridoxal phosphate binding"/>
    <property type="evidence" value="ECO:0007669"/>
    <property type="project" value="InterPro"/>
</dbReference>
<dbReference type="GO" id="GO:0008483">
    <property type="term" value="F:transaminase activity"/>
    <property type="evidence" value="ECO:0007669"/>
    <property type="project" value="InterPro"/>
</dbReference>
<dbReference type="GO" id="GO:0006782">
    <property type="term" value="P:protoporphyrinogen IX biosynthetic process"/>
    <property type="evidence" value="ECO:0007669"/>
    <property type="project" value="UniProtKB-UniRule"/>
</dbReference>
<dbReference type="CDD" id="cd00610">
    <property type="entry name" value="OAT_like"/>
    <property type="match status" value="1"/>
</dbReference>
<dbReference type="FunFam" id="3.40.640.10:FF:000021">
    <property type="entry name" value="Glutamate-1-semialdehyde 2,1-aminomutase"/>
    <property type="match status" value="1"/>
</dbReference>
<dbReference type="Gene3D" id="3.90.1150.10">
    <property type="entry name" value="Aspartate Aminotransferase, domain 1"/>
    <property type="match status" value="1"/>
</dbReference>
<dbReference type="Gene3D" id="3.40.640.10">
    <property type="entry name" value="Type I PLP-dependent aspartate aminotransferase-like (Major domain)"/>
    <property type="match status" value="1"/>
</dbReference>
<dbReference type="HAMAP" id="MF_00375">
    <property type="entry name" value="HemL_aminotrans_3"/>
    <property type="match status" value="1"/>
</dbReference>
<dbReference type="InterPro" id="IPR004639">
    <property type="entry name" value="4pyrrol_synth_GluAld_NH2Trfase"/>
</dbReference>
<dbReference type="InterPro" id="IPR005814">
    <property type="entry name" value="Aminotrans_3"/>
</dbReference>
<dbReference type="InterPro" id="IPR049704">
    <property type="entry name" value="Aminotrans_3_PPA_site"/>
</dbReference>
<dbReference type="InterPro" id="IPR015424">
    <property type="entry name" value="PyrdxlP-dep_Trfase"/>
</dbReference>
<dbReference type="InterPro" id="IPR015421">
    <property type="entry name" value="PyrdxlP-dep_Trfase_major"/>
</dbReference>
<dbReference type="InterPro" id="IPR015422">
    <property type="entry name" value="PyrdxlP-dep_Trfase_small"/>
</dbReference>
<dbReference type="NCBIfam" id="TIGR00713">
    <property type="entry name" value="hemL"/>
    <property type="match status" value="1"/>
</dbReference>
<dbReference type="NCBIfam" id="NF000818">
    <property type="entry name" value="PRK00062.1"/>
    <property type="match status" value="1"/>
</dbReference>
<dbReference type="PANTHER" id="PTHR43713">
    <property type="entry name" value="GLUTAMATE-1-SEMIALDEHYDE 2,1-AMINOMUTASE"/>
    <property type="match status" value="1"/>
</dbReference>
<dbReference type="PANTHER" id="PTHR43713:SF3">
    <property type="entry name" value="GLUTAMATE-1-SEMIALDEHYDE 2,1-AMINOMUTASE 1, CHLOROPLASTIC-RELATED"/>
    <property type="match status" value="1"/>
</dbReference>
<dbReference type="Pfam" id="PF00202">
    <property type="entry name" value="Aminotran_3"/>
    <property type="match status" value="1"/>
</dbReference>
<dbReference type="SUPFAM" id="SSF53383">
    <property type="entry name" value="PLP-dependent transferases"/>
    <property type="match status" value="1"/>
</dbReference>
<dbReference type="PROSITE" id="PS00600">
    <property type="entry name" value="AA_TRANSFER_CLASS_3"/>
    <property type="match status" value="1"/>
</dbReference>
<keyword id="KW-0963">Cytoplasm</keyword>
<keyword id="KW-0413">Isomerase</keyword>
<keyword id="KW-0627">Porphyrin biosynthesis</keyword>
<keyword id="KW-0663">Pyridoxal phosphate</keyword>
<keyword id="KW-1185">Reference proteome</keyword>
<sequence>MNTSHSKELFAKAQEIIPGGVNSPVRAFKSVGAEPVFIKKASGSTIIDADDNAYIDYVGSWGPMILGHCHPRIVASVQRATENGSSFGAPTELEITLAEMVVAAVPSIEMVRMVSSGTEATMSAIRLARGYTGRDKIIKFSGCYHGHADSLLVKAGSGAATFGVPDSPGVPRDFAQHTLTATFNDLESVEELICAHSREVACIIVEPIAGNMGTVPPRAGFLEGLREICTNEGIILIFDEVMTGFRVAYGGAQERYGITPDMTTLGKIIGGGLPVGAFGGKREIMQQLSPSGGVYQAGTLSGNPLAMTAGIETLKLLQEDGFYGRLEEKSRALAEGIADAARRAGYPIYSTRVGSMFCAFFTNGEVHDWTSAAMCDTKSFATFFRSMLEEGIYLAPSQFETAFVSIAHSSEDIEKTIAAAFSCFKKL</sequence>
<gene>
    <name evidence="1" type="primary">hemL</name>
    <name type="ordered locus">Gmet_3356</name>
</gene>
<proteinExistence type="inferred from homology"/>
<organism>
    <name type="scientific">Geobacter metallireducens (strain ATCC 53774 / DSM 7210 / GS-15)</name>
    <dbReference type="NCBI Taxonomy" id="269799"/>
    <lineage>
        <taxon>Bacteria</taxon>
        <taxon>Pseudomonadati</taxon>
        <taxon>Thermodesulfobacteriota</taxon>
        <taxon>Desulfuromonadia</taxon>
        <taxon>Geobacterales</taxon>
        <taxon>Geobacteraceae</taxon>
        <taxon>Geobacter</taxon>
    </lineage>
</organism>
<reference key="1">
    <citation type="journal article" date="2009" name="BMC Microbiol.">
        <title>The genome sequence of Geobacter metallireducens: features of metabolism, physiology and regulation common and dissimilar to Geobacter sulfurreducens.</title>
        <authorList>
            <person name="Aklujkar M."/>
            <person name="Krushkal J."/>
            <person name="DiBartolo G."/>
            <person name="Lapidus A."/>
            <person name="Land M.L."/>
            <person name="Lovley D.R."/>
        </authorList>
    </citation>
    <scope>NUCLEOTIDE SEQUENCE [LARGE SCALE GENOMIC DNA]</scope>
    <source>
        <strain>ATCC 53774 / DSM 7210 / GS-15</strain>
    </source>
</reference>